<dbReference type="EMBL" id="CP000142">
    <property type="protein sequence ID" value="ABA89359.1"/>
    <property type="molecule type" value="Genomic_DNA"/>
</dbReference>
<dbReference type="RefSeq" id="WP_011341872.1">
    <property type="nucleotide sequence ID" value="NC_007498.2"/>
</dbReference>
<dbReference type="SMR" id="Q3A2P8"/>
<dbReference type="KEGG" id="pca:Pcar_2119"/>
<dbReference type="eggNOG" id="COG2848">
    <property type="taxonomic scope" value="Bacteria"/>
</dbReference>
<dbReference type="HOGENOM" id="CLU_048704_0_0_7"/>
<dbReference type="OrthoDB" id="9763001at2"/>
<dbReference type="Proteomes" id="UP000002534">
    <property type="component" value="Chromosome"/>
</dbReference>
<dbReference type="CDD" id="cd08025">
    <property type="entry name" value="RNR_PFL_like_DUF711"/>
    <property type="match status" value="1"/>
</dbReference>
<dbReference type="Gene3D" id="3.20.70.20">
    <property type="match status" value="1"/>
</dbReference>
<dbReference type="HAMAP" id="MF_01221">
    <property type="entry name" value="UPF0210"/>
    <property type="match status" value="1"/>
</dbReference>
<dbReference type="InterPro" id="IPR007841">
    <property type="entry name" value="UPF0210"/>
</dbReference>
<dbReference type="NCBIfam" id="NF003700">
    <property type="entry name" value="PRK05313.1"/>
    <property type="match status" value="1"/>
</dbReference>
<dbReference type="PANTHER" id="PTHR37560:SF1">
    <property type="entry name" value="UPF0210 PROTEIN MJ1665"/>
    <property type="match status" value="1"/>
</dbReference>
<dbReference type="PANTHER" id="PTHR37560">
    <property type="entry name" value="UPF0210 PROTEIN SPR0218"/>
    <property type="match status" value="1"/>
</dbReference>
<dbReference type="Pfam" id="PF05167">
    <property type="entry name" value="DUF711"/>
    <property type="match status" value="1"/>
</dbReference>
<dbReference type="SUPFAM" id="SSF51998">
    <property type="entry name" value="PFL-like glycyl radical enzymes"/>
    <property type="match status" value="1"/>
</dbReference>
<sequence>MLIHPEEILETIKMVTNEHLDIRTVTMGINLRGCSHPDIKVFNEQVYTRIMRCAEKLVATTEDIQNLYGIPIINKRISVTPIAIVAEACQEEDLSSVAEALDRAAQETGIDFIGGFSALVQKGMTPGDLSLINSIPQALASTKKVCSSVNVATTKAGINMDAVAKMGHIIKQTAELTRDSNGLGCAKLVVFANAPEDNPFMAGAFHGIGEPDCVINVGVSGPGVVNSAVRALQNPALGDISECIKKTAFKITRMGEMVGREVARRLDAQFGVLDLSLAPTPAVGDSVAAILEAMGLESCGTHGTTAALALLNDAVKKGGAMASSSVGGLSGAFIPVSEDQGMIKAVQRGSLSLDKLEAMTCVCSVGLDMIAVPGDTSPATISAIIADEMAIGMINKKTTAVRVITAPGTKVGDMVEFGGLLGSAPVMPVHNFSSETFIARGGKIPAPIQSLTN</sequence>
<organism>
    <name type="scientific">Syntrophotalea carbinolica (strain DSM 2380 / NBRC 103641 / GraBd1)</name>
    <name type="common">Pelobacter carbinolicus</name>
    <dbReference type="NCBI Taxonomy" id="338963"/>
    <lineage>
        <taxon>Bacteria</taxon>
        <taxon>Pseudomonadati</taxon>
        <taxon>Thermodesulfobacteriota</taxon>
        <taxon>Desulfuromonadia</taxon>
        <taxon>Desulfuromonadales</taxon>
        <taxon>Syntrophotaleaceae</taxon>
        <taxon>Syntrophotalea</taxon>
    </lineage>
</organism>
<accession>Q3A2P8</accession>
<feature type="chain" id="PRO_1000213967" description="UPF0210 protein Pcar_2119">
    <location>
        <begin position="1"/>
        <end position="453"/>
    </location>
</feature>
<reference key="1">
    <citation type="submission" date="2005-10" db="EMBL/GenBank/DDBJ databases">
        <title>Complete sequence of Pelobacter carbinolicus DSM 2380.</title>
        <authorList>
            <person name="Copeland A."/>
            <person name="Lucas S."/>
            <person name="Lapidus A."/>
            <person name="Barry K."/>
            <person name="Detter J.C."/>
            <person name="Glavina T."/>
            <person name="Hammon N."/>
            <person name="Israni S."/>
            <person name="Pitluck S."/>
            <person name="Chertkov O."/>
            <person name="Schmutz J."/>
            <person name="Larimer F."/>
            <person name="Land M."/>
            <person name="Kyrpides N."/>
            <person name="Ivanova N."/>
            <person name="Richardson P."/>
        </authorList>
    </citation>
    <scope>NUCLEOTIDE SEQUENCE [LARGE SCALE GENOMIC DNA]</scope>
    <source>
        <strain>DSM 2380 / NBRC 103641 / GraBd1</strain>
    </source>
</reference>
<comment type="subunit">
    <text evidence="1">Homodimer.</text>
</comment>
<comment type="similarity">
    <text evidence="1">Belongs to the UPF0210 family.</text>
</comment>
<keyword id="KW-1185">Reference proteome</keyword>
<name>Y2119_SYNC1</name>
<evidence type="ECO:0000255" key="1">
    <source>
        <dbReference type="HAMAP-Rule" id="MF_01221"/>
    </source>
</evidence>
<protein>
    <recommendedName>
        <fullName evidence="1">UPF0210 protein Pcar_2119</fullName>
    </recommendedName>
</protein>
<proteinExistence type="inferred from homology"/>
<gene>
    <name type="ordered locus">Pcar_2119</name>
</gene>